<protein>
    <recommendedName>
        <fullName evidence="1">Large ribosomal subunit protein uL4</fullName>
    </recommendedName>
    <alternativeName>
        <fullName evidence="3">50S ribosomal protein L4</fullName>
    </alternativeName>
</protein>
<gene>
    <name evidence="1" type="primary">rplD</name>
    <name type="ordered locus">Lm4b_02598</name>
</gene>
<comment type="function">
    <text evidence="1">One of the primary rRNA binding proteins, this protein initially binds near the 5'-end of the 23S rRNA. It is important during the early stages of 50S assembly. It makes multiple contacts with different domains of the 23S rRNA in the assembled 50S subunit and ribosome.</text>
</comment>
<comment type="function">
    <text evidence="1">Forms part of the polypeptide exit tunnel.</text>
</comment>
<comment type="subunit">
    <text evidence="1">Part of the 50S ribosomal subunit.</text>
</comment>
<comment type="similarity">
    <text evidence="1">Belongs to the universal ribosomal protein uL4 family.</text>
</comment>
<accession>C1KZH9</accession>
<name>RL4_LISMC</name>
<feature type="chain" id="PRO_1000214578" description="Large ribosomal subunit protein uL4">
    <location>
        <begin position="1"/>
        <end position="207"/>
    </location>
</feature>
<feature type="region of interest" description="Disordered" evidence="2">
    <location>
        <begin position="47"/>
        <end position="78"/>
    </location>
</feature>
<feature type="compositionally biased region" description="Basic residues" evidence="2">
    <location>
        <begin position="60"/>
        <end position="71"/>
    </location>
</feature>
<reference key="1">
    <citation type="journal article" date="2012" name="BMC Genomics">
        <title>Comparative genomics and transcriptomics of lineages I, II, and III strains of Listeria monocytogenes.</title>
        <authorList>
            <person name="Hain T."/>
            <person name="Ghai R."/>
            <person name="Billion A."/>
            <person name="Kuenne C.T."/>
            <person name="Steinweg C."/>
            <person name="Izar B."/>
            <person name="Mohamed W."/>
            <person name="Mraheil M."/>
            <person name="Domann E."/>
            <person name="Schaffrath S."/>
            <person name="Karst U."/>
            <person name="Goesmann A."/>
            <person name="Oehm S."/>
            <person name="Puhler A."/>
            <person name="Merkl R."/>
            <person name="Vorwerk S."/>
            <person name="Glaser P."/>
            <person name="Garrido P."/>
            <person name="Rusniok C."/>
            <person name="Buchrieser C."/>
            <person name="Goebel W."/>
            <person name="Chakraborty T."/>
        </authorList>
    </citation>
    <scope>NUCLEOTIDE SEQUENCE [LARGE SCALE GENOMIC DNA]</scope>
    <source>
        <strain>CLIP80459</strain>
    </source>
</reference>
<proteinExistence type="inferred from homology"/>
<sequence length="207" mass="22603">MPKLSLLKQDGTNAGEITLNDTVFGIEPNEKVVVDVILSQRASLRQGTHKVKNRSEVRGGGRKPWRQKGTGRARQGSIRSPQWRGGGVVFGPTPRSYAYKLPKKVRRLAIKSILSSKVNEEKLVVLEGLTFDAPKTKEFAAFLKNISVDTKALIVVAGESENVELSARNLQGITVIPAESISVLEVAKHDKLIITKAAVEKVEEVLA</sequence>
<dbReference type="EMBL" id="FM242711">
    <property type="protein sequence ID" value="CAS06352.1"/>
    <property type="molecule type" value="Genomic_DNA"/>
</dbReference>
<dbReference type="RefSeq" id="WP_003727695.1">
    <property type="nucleotide sequence ID" value="NC_012488.1"/>
</dbReference>
<dbReference type="SMR" id="C1KZH9"/>
<dbReference type="GeneID" id="93240512"/>
<dbReference type="KEGG" id="lmc:Lm4b_02598"/>
<dbReference type="HOGENOM" id="CLU_041575_5_2_9"/>
<dbReference type="GO" id="GO:1990904">
    <property type="term" value="C:ribonucleoprotein complex"/>
    <property type="evidence" value="ECO:0007669"/>
    <property type="project" value="UniProtKB-KW"/>
</dbReference>
<dbReference type="GO" id="GO:0005840">
    <property type="term" value="C:ribosome"/>
    <property type="evidence" value="ECO:0007669"/>
    <property type="project" value="UniProtKB-KW"/>
</dbReference>
<dbReference type="GO" id="GO:0019843">
    <property type="term" value="F:rRNA binding"/>
    <property type="evidence" value="ECO:0007669"/>
    <property type="project" value="UniProtKB-UniRule"/>
</dbReference>
<dbReference type="GO" id="GO:0003735">
    <property type="term" value="F:structural constituent of ribosome"/>
    <property type="evidence" value="ECO:0007669"/>
    <property type="project" value="InterPro"/>
</dbReference>
<dbReference type="GO" id="GO:0006412">
    <property type="term" value="P:translation"/>
    <property type="evidence" value="ECO:0007669"/>
    <property type="project" value="UniProtKB-UniRule"/>
</dbReference>
<dbReference type="FunFam" id="3.40.1370.10:FF:000003">
    <property type="entry name" value="50S ribosomal protein L4"/>
    <property type="match status" value="1"/>
</dbReference>
<dbReference type="Gene3D" id="3.40.1370.10">
    <property type="match status" value="1"/>
</dbReference>
<dbReference type="HAMAP" id="MF_01328_B">
    <property type="entry name" value="Ribosomal_uL4_B"/>
    <property type="match status" value="1"/>
</dbReference>
<dbReference type="InterPro" id="IPR002136">
    <property type="entry name" value="Ribosomal_uL4"/>
</dbReference>
<dbReference type="InterPro" id="IPR013005">
    <property type="entry name" value="Ribosomal_uL4-like"/>
</dbReference>
<dbReference type="InterPro" id="IPR023574">
    <property type="entry name" value="Ribosomal_uL4_dom_sf"/>
</dbReference>
<dbReference type="NCBIfam" id="TIGR03953">
    <property type="entry name" value="rplD_bact"/>
    <property type="match status" value="1"/>
</dbReference>
<dbReference type="PANTHER" id="PTHR10746">
    <property type="entry name" value="50S RIBOSOMAL PROTEIN L4"/>
    <property type="match status" value="1"/>
</dbReference>
<dbReference type="PANTHER" id="PTHR10746:SF6">
    <property type="entry name" value="LARGE RIBOSOMAL SUBUNIT PROTEIN UL4M"/>
    <property type="match status" value="1"/>
</dbReference>
<dbReference type="Pfam" id="PF00573">
    <property type="entry name" value="Ribosomal_L4"/>
    <property type="match status" value="1"/>
</dbReference>
<dbReference type="SUPFAM" id="SSF52166">
    <property type="entry name" value="Ribosomal protein L4"/>
    <property type="match status" value="1"/>
</dbReference>
<keyword id="KW-0687">Ribonucleoprotein</keyword>
<keyword id="KW-0689">Ribosomal protein</keyword>
<keyword id="KW-0694">RNA-binding</keyword>
<keyword id="KW-0699">rRNA-binding</keyword>
<organism>
    <name type="scientific">Listeria monocytogenes serotype 4b (strain CLIP80459)</name>
    <dbReference type="NCBI Taxonomy" id="568819"/>
    <lineage>
        <taxon>Bacteria</taxon>
        <taxon>Bacillati</taxon>
        <taxon>Bacillota</taxon>
        <taxon>Bacilli</taxon>
        <taxon>Bacillales</taxon>
        <taxon>Listeriaceae</taxon>
        <taxon>Listeria</taxon>
    </lineage>
</organism>
<evidence type="ECO:0000255" key="1">
    <source>
        <dbReference type="HAMAP-Rule" id="MF_01328"/>
    </source>
</evidence>
<evidence type="ECO:0000256" key="2">
    <source>
        <dbReference type="SAM" id="MobiDB-lite"/>
    </source>
</evidence>
<evidence type="ECO:0000305" key="3"/>